<keyword id="KW-0963">Cytoplasm</keyword>
<keyword id="KW-0597">Phosphoprotein</keyword>
<name>CITD_ECOSE</name>
<evidence type="ECO:0000255" key="1">
    <source>
        <dbReference type="HAMAP-Rule" id="MF_00805"/>
    </source>
</evidence>
<protein>
    <recommendedName>
        <fullName evidence="1">Citrate lyase acyl carrier protein</fullName>
    </recommendedName>
    <alternativeName>
        <fullName evidence="1">Citrate lyase gamma chain</fullName>
    </alternativeName>
</protein>
<dbReference type="EMBL" id="AP009240">
    <property type="protein sequence ID" value="BAG76209.1"/>
    <property type="molecule type" value="Genomic_DNA"/>
</dbReference>
<dbReference type="RefSeq" id="WP_000700703.1">
    <property type="nucleotide sequence ID" value="NC_011415.1"/>
</dbReference>
<dbReference type="SMR" id="B6I0S6"/>
<dbReference type="GeneID" id="93776868"/>
<dbReference type="KEGG" id="ecy:ECSE_0685"/>
<dbReference type="HOGENOM" id="CLU_158489_0_0_6"/>
<dbReference type="Proteomes" id="UP000008199">
    <property type="component" value="Chromosome"/>
</dbReference>
<dbReference type="GO" id="GO:0005737">
    <property type="term" value="C:cytoplasm"/>
    <property type="evidence" value="ECO:0007669"/>
    <property type="project" value="UniProtKB-SubCell"/>
</dbReference>
<dbReference type="HAMAP" id="MF_00805">
    <property type="entry name" value="CitD"/>
    <property type="match status" value="1"/>
</dbReference>
<dbReference type="InterPro" id="IPR006495">
    <property type="entry name" value="CitD"/>
</dbReference>
<dbReference type="InterPro" id="IPR023439">
    <property type="entry name" value="Mal_deCO2ase/Cit_lyase_ACP"/>
</dbReference>
<dbReference type="NCBIfam" id="TIGR01608">
    <property type="entry name" value="citD"/>
    <property type="match status" value="1"/>
</dbReference>
<dbReference type="NCBIfam" id="NF009726">
    <property type="entry name" value="PRK13253.1"/>
    <property type="match status" value="1"/>
</dbReference>
<dbReference type="Pfam" id="PF06857">
    <property type="entry name" value="ACP"/>
    <property type="match status" value="1"/>
</dbReference>
<dbReference type="PIRSF" id="PIRSF002736">
    <property type="entry name" value="Citrt_lyas_gamma"/>
    <property type="match status" value="1"/>
</dbReference>
<sequence length="98" mass="10689">MKINQPAVAGTLESGDVMIRIAPLDTQDIDLQINSSVEKQFGDAIRTTILDVLARYNVRGVQLNVDDKGALDCILRARLEALLARASGIPALPWEDCQ</sequence>
<organism>
    <name type="scientific">Escherichia coli (strain SE11)</name>
    <dbReference type="NCBI Taxonomy" id="409438"/>
    <lineage>
        <taxon>Bacteria</taxon>
        <taxon>Pseudomonadati</taxon>
        <taxon>Pseudomonadota</taxon>
        <taxon>Gammaproteobacteria</taxon>
        <taxon>Enterobacterales</taxon>
        <taxon>Enterobacteriaceae</taxon>
        <taxon>Escherichia</taxon>
    </lineage>
</organism>
<gene>
    <name evidence="1" type="primary">citD</name>
    <name type="ordered locus">ECSE_0685</name>
</gene>
<proteinExistence type="inferred from homology"/>
<comment type="function">
    <text evidence="1">Covalent carrier of the coenzyme of citrate lyase.</text>
</comment>
<comment type="subunit">
    <text evidence="1">Oligomer with a subunit composition of (alpha,beta,gamma)6.</text>
</comment>
<comment type="subcellular location">
    <subcellularLocation>
        <location evidence="1">Cytoplasm</location>
    </subcellularLocation>
</comment>
<comment type="similarity">
    <text evidence="1">Belongs to the CitD family.</text>
</comment>
<accession>B6I0S6</accession>
<feature type="chain" id="PRO_1000133969" description="Citrate lyase acyl carrier protein">
    <location>
        <begin position="1"/>
        <end position="98"/>
    </location>
</feature>
<feature type="modified residue" description="O-(phosphoribosyl dephospho-coenzyme A)serine" evidence="1">
    <location>
        <position position="14"/>
    </location>
</feature>
<reference key="1">
    <citation type="journal article" date="2008" name="DNA Res.">
        <title>Complete genome sequence and comparative analysis of the wild-type commensal Escherichia coli strain SE11 isolated from a healthy adult.</title>
        <authorList>
            <person name="Oshima K."/>
            <person name="Toh H."/>
            <person name="Ogura Y."/>
            <person name="Sasamoto H."/>
            <person name="Morita H."/>
            <person name="Park S.-H."/>
            <person name="Ooka T."/>
            <person name="Iyoda S."/>
            <person name="Taylor T.D."/>
            <person name="Hayashi T."/>
            <person name="Itoh K."/>
            <person name="Hattori M."/>
        </authorList>
    </citation>
    <scope>NUCLEOTIDE SEQUENCE [LARGE SCALE GENOMIC DNA]</scope>
    <source>
        <strain>SE11</strain>
    </source>
</reference>